<proteinExistence type="inferred from homology"/>
<reference key="1">
    <citation type="submission" date="2009-01" db="EMBL/GenBank/DDBJ databases">
        <title>Complete sequence of Chloroflexus sp. Y-400-fl.</title>
        <authorList>
            <consortium name="US DOE Joint Genome Institute"/>
            <person name="Lucas S."/>
            <person name="Copeland A."/>
            <person name="Lapidus A."/>
            <person name="Glavina del Rio T."/>
            <person name="Dalin E."/>
            <person name="Tice H."/>
            <person name="Bruce D."/>
            <person name="Goodwin L."/>
            <person name="Pitluck S."/>
            <person name="Sims D."/>
            <person name="Kiss H."/>
            <person name="Brettin T."/>
            <person name="Detter J.C."/>
            <person name="Han C."/>
            <person name="Larimer F."/>
            <person name="Land M."/>
            <person name="Hauser L."/>
            <person name="Kyrpides N."/>
            <person name="Ovchinnikova G."/>
            <person name="Bryant D.A."/>
            <person name="Richardson P."/>
        </authorList>
    </citation>
    <scope>NUCLEOTIDE SEQUENCE [LARGE SCALE GENOMIC DNA]</scope>
    <source>
        <strain>ATCC 29364 / DSM 637 / Y-400-fl</strain>
    </source>
</reference>
<evidence type="ECO:0000255" key="1">
    <source>
        <dbReference type="HAMAP-Rule" id="MF_00009"/>
    </source>
</evidence>
<protein>
    <recommendedName>
        <fullName evidence="1">Endoribonuclease YbeY</fullName>
        <ecNumber evidence="1">3.1.-.-</ecNumber>
    </recommendedName>
</protein>
<name>YBEY_CHLSY</name>
<comment type="function">
    <text evidence="1">Single strand-specific metallo-endoribonuclease involved in late-stage 70S ribosome quality control and in maturation of the 3' terminus of the 16S rRNA.</text>
</comment>
<comment type="cofactor">
    <cofactor evidence="1">
        <name>Zn(2+)</name>
        <dbReference type="ChEBI" id="CHEBI:29105"/>
    </cofactor>
    <text evidence="1">Binds 1 zinc ion.</text>
</comment>
<comment type="subcellular location">
    <subcellularLocation>
        <location evidence="1">Cytoplasm</location>
    </subcellularLocation>
</comment>
<comment type="similarity">
    <text evidence="1">Belongs to the endoribonuclease YbeY family.</text>
</comment>
<feature type="chain" id="PRO_1000199963" description="Endoribonuclease YbeY">
    <location>
        <begin position="1"/>
        <end position="154"/>
    </location>
</feature>
<feature type="binding site" evidence="1">
    <location>
        <position position="118"/>
    </location>
    <ligand>
        <name>Zn(2+)</name>
        <dbReference type="ChEBI" id="CHEBI:29105"/>
        <note>catalytic</note>
    </ligand>
</feature>
<feature type="binding site" evidence="1">
    <location>
        <position position="122"/>
    </location>
    <ligand>
        <name>Zn(2+)</name>
        <dbReference type="ChEBI" id="CHEBI:29105"/>
        <note>catalytic</note>
    </ligand>
</feature>
<feature type="binding site" evidence="1">
    <location>
        <position position="128"/>
    </location>
    <ligand>
        <name>Zn(2+)</name>
        <dbReference type="ChEBI" id="CHEBI:29105"/>
        <note>catalytic</note>
    </ligand>
</feature>
<gene>
    <name evidence="1" type="primary">ybeY</name>
    <name type="ordered locus">Chy400_3584</name>
</gene>
<organism>
    <name type="scientific">Chloroflexus aurantiacus (strain ATCC 29364 / DSM 637 / Y-400-fl)</name>
    <dbReference type="NCBI Taxonomy" id="480224"/>
    <lineage>
        <taxon>Bacteria</taxon>
        <taxon>Bacillati</taxon>
        <taxon>Chloroflexota</taxon>
        <taxon>Chloroflexia</taxon>
        <taxon>Chloroflexales</taxon>
        <taxon>Chloroflexineae</taxon>
        <taxon>Chloroflexaceae</taxon>
        <taxon>Chloroflexus</taxon>
    </lineage>
</organism>
<accession>B9LD66</accession>
<dbReference type="EC" id="3.1.-.-" evidence="1"/>
<dbReference type="EMBL" id="CP001364">
    <property type="protein sequence ID" value="ACM54955.1"/>
    <property type="molecule type" value="Genomic_DNA"/>
</dbReference>
<dbReference type="SMR" id="B9LD66"/>
<dbReference type="KEGG" id="chl:Chy400_3584"/>
<dbReference type="HOGENOM" id="CLU_106710_3_0_0"/>
<dbReference type="OrthoDB" id="9807740at2"/>
<dbReference type="GO" id="GO:0005737">
    <property type="term" value="C:cytoplasm"/>
    <property type="evidence" value="ECO:0007669"/>
    <property type="project" value="UniProtKB-SubCell"/>
</dbReference>
<dbReference type="GO" id="GO:0004222">
    <property type="term" value="F:metalloendopeptidase activity"/>
    <property type="evidence" value="ECO:0007669"/>
    <property type="project" value="InterPro"/>
</dbReference>
<dbReference type="GO" id="GO:0004521">
    <property type="term" value="F:RNA endonuclease activity"/>
    <property type="evidence" value="ECO:0007669"/>
    <property type="project" value="UniProtKB-UniRule"/>
</dbReference>
<dbReference type="GO" id="GO:0008270">
    <property type="term" value="F:zinc ion binding"/>
    <property type="evidence" value="ECO:0007669"/>
    <property type="project" value="UniProtKB-UniRule"/>
</dbReference>
<dbReference type="GO" id="GO:0006364">
    <property type="term" value="P:rRNA processing"/>
    <property type="evidence" value="ECO:0007669"/>
    <property type="project" value="UniProtKB-UniRule"/>
</dbReference>
<dbReference type="Gene3D" id="3.40.390.30">
    <property type="entry name" value="Metalloproteases ('zincins'), catalytic domain"/>
    <property type="match status" value="1"/>
</dbReference>
<dbReference type="HAMAP" id="MF_00009">
    <property type="entry name" value="Endoribonucl_YbeY"/>
    <property type="match status" value="1"/>
</dbReference>
<dbReference type="InterPro" id="IPR023091">
    <property type="entry name" value="MetalPrtase_cat_dom_sf_prd"/>
</dbReference>
<dbReference type="InterPro" id="IPR002036">
    <property type="entry name" value="YbeY"/>
</dbReference>
<dbReference type="InterPro" id="IPR020549">
    <property type="entry name" value="YbeY_CS"/>
</dbReference>
<dbReference type="NCBIfam" id="TIGR00043">
    <property type="entry name" value="rRNA maturation RNase YbeY"/>
    <property type="match status" value="1"/>
</dbReference>
<dbReference type="PANTHER" id="PTHR46986">
    <property type="entry name" value="ENDORIBONUCLEASE YBEY, CHLOROPLASTIC"/>
    <property type="match status" value="1"/>
</dbReference>
<dbReference type="PANTHER" id="PTHR46986:SF1">
    <property type="entry name" value="ENDORIBONUCLEASE YBEY, CHLOROPLASTIC"/>
    <property type="match status" value="1"/>
</dbReference>
<dbReference type="Pfam" id="PF02130">
    <property type="entry name" value="YbeY"/>
    <property type="match status" value="1"/>
</dbReference>
<dbReference type="SUPFAM" id="SSF55486">
    <property type="entry name" value="Metalloproteases ('zincins'), catalytic domain"/>
    <property type="match status" value="1"/>
</dbReference>
<dbReference type="PROSITE" id="PS01306">
    <property type="entry name" value="UPF0054"/>
    <property type="match status" value="1"/>
</dbReference>
<keyword id="KW-0963">Cytoplasm</keyword>
<keyword id="KW-0255">Endonuclease</keyword>
<keyword id="KW-0378">Hydrolase</keyword>
<keyword id="KW-0479">Metal-binding</keyword>
<keyword id="KW-0540">Nuclease</keyword>
<keyword id="KW-0690">Ribosome biogenesis</keyword>
<keyword id="KW-0698">rRNA processing</keyword>
<keyword id="KW-0862">Zinc</keyword>
<sequence>MIYTIEVQLDEGITADSELVERAAAAVLAAEQMPEGCEVGIRITTDDELHRLNRDFRGVDAPTDVLSFADDGHDSRFVVAPDQPRYLGDIAISYQRVLAQAAEYGHSPARELAYLTVHGVLHLLGYDHEQGPAEAARMRTREEEIMTILGLPRE</sequence>